<sequence>MNDTTAKTLNCSPASRDGFPETLGDFGRTRVDLPVVLVAGPTGVGKTAFAVELARALGSEIVNADSMQVYRHMDIGTAKPTPRERSAVPHHLIDIVDPDEPFDAGDYLARARPVIATLHEAGKVPIVVGGTGLYLKVLTRGICAGAPGDPDVRRRLIEEELTLGLPALHERLRDVDPPLGARIHPNDRQRILRALEVFHHSGKPLSYWQRQHRFEDAPYRTLKIFLHRPREVLYARINDRVDAMMAQGFLDEVRNLLAMGCGPELKPMQSLGYRQMARHLRGEMSLDEAVNEIRRDTRRYAKRQLTWFRADPEYRWFDAADTHGLVARIVRETPDLHDNRLR</sequence>
<reference key="1">
    <citation type="submission" date="2006-10" db="EMBL/GenBank/DDBJ databases">
        <title>Complete sequence of Syntrophobacter fumaroxidans MPOB.</title>
        <authorList>
            <consortium name="US DOE Joint Genome Institute"/>
            <person name="Copeland A."/>
            <person name="Lucas S."/>
            <person name="Lapidus A."/>
            <person name="Barry K."/>
            <person name="Detter J.C."/>
            <person name="Glavina del Rio T."/>
            <person name="Hammon N."/>
            <person name="Israni S."/>
            <person name="Pitluck S."/>
            <person name="Goltsman E.G."/>
            <person name="Martinez M."/>
            <person name="Schmutz J."/>
            <person name="Larimer F."/>
            <person name="Land M."/>
            <person name="Hauser L."/>
            <person name="Kyrpides N."/>
            <person name="Kim E."/>
            <person name="Boone D.R."/>
            <person name="Brockman F."/>
            <person name="Culley D."/>
            <person name="Ferry J."/>
            <person name="Gunsalus R."/>
            <person name="McInerney M.J."/>
            <person name="Morrison M."/>
            <person name="Plugge C."/>
            <person name="Rohlin L."/>
            <person name="Scholten J."/>
            <person name="Sieber J."/>
            <person name="Stams A.J.M."/>
            <person name="Worm P."/>
            <person name="Henstra A.M."/>
            <person name="Richardson P."/>
        </authorList>
    </citation>
    <scope>NUCLEOTIDE SEQUENCE [LARGE SCALE GENOMIC DNA]</scope>
    <source>
        <strain>DSM 10017 / MPOB</strain>
    </source>
</reference>
<organism>
    <name type="scientific">Syntrophobacter fumaroxidans (strain DSM 10017 / MPOB)</name>
    <dbReference type="NCBI Taxonomy" id="335543"/>
    <lineage>
        <taxon>Bacteria</taxon>
        <taxon>Pseudomonadati</taxon>
        <taxon>Thermodesulfobacteriota</taxon>
        <taxon>Syntrophobacteria</taxon>
        <taxon>Syntrophobacterales</taxon>
        <taxon>Syntrophobacteraceae</taxon>
        <taxon>Syntrophobacter</taxon>
    </lineage>
</organism>
<accession>A0LJK3</accession>
<evidence type="ECO:0000255" key="1">
    <source>
        <dbReference type="HAMAP-Rule" id="MF_00185"/>
    </source>
</evidence>
<evidence type="ECO:0000256" key="2">
    <source>
        <dbReference type="SAM" id="MobiDB-lite"/>
    </source>
</evidence>
<comment type="function">
    <text evidence="1">Catalyzes the transfer of a dimethylallyl group onto the adenine at position 37 in tRNAs that read codons beginning with uridine, leading to the formation of N6-(dimethylallyl)adenosine (i(6)A).</text>
</comment>
<comment type="catalytic activity">
    <reaction evidence="1">
        <text>adenosine(37) in tRNA + dimethylallyl diphosphate = N(6)-dimethylallyladenosine(37) in tRNA + diphosphate</text>
        <dbReference type="Rhea" id="RHEA:26482"/>
        <dbReference type="Rhea" id="RHEA-COMP:10162"/>
        <dbReference type="Rhea" id="RHEA-COMP:10375"/>
        <dbReference type="ChEBI" id="CHEBI:33019"/>
        <dbReference type="ChEBI" id="CHEBI:57623"/>
        <dbReference type="ChEBI" id="CHEBI:74411"/>
        <dbReference type="ChEBI" id="CHEBI:74415"/>
        <dbReference type="EC" id="2.5.1.75"/>
    </reaction>
</comment>
<comment type="cofactor">
    <cofactor evidence="1">
        <name>Mg(2+)</name>
        <dbReference type="ChEBI" id="CHEBI:18420"/>
    </cofactor>
</comment>
<comment type="subunit">
    <text evidence="1">Monomer.</text>
</comment>
<comment type="similarity">
    <text evidence="1">Belongs to the IPP transferase family.</text>
</comment>
<gene>
    <name evidence="1" type="primary">miaA</name>
    <name type="ordered locus">Sfum_1920</name>
</gene>
<keyword id="KW-0067">ATP-binding</keyword>
<keyword id="KW-0460">Magnesium</keyword>
<keyword id="KW-0547">Nucleotide-binding</keyword>
<keyword id="KW-1185">Reference proteome</keyword>
<keyword id="KW-0808">Transferase</keyword>
<keyword id="KW-0819">tRNA processing</keyword>
<dbReference type="EC" id="2.5.1.75" evidence="1"/>
<dbReference type="EMBL" id="CP000478">
    <property type="protein sequence ID" value="ABK17605.1"/>
    <property type="molecule type" value="Genomic_DNA"/>
</dbReference>
<dbReference type="SMR" id="A0LJK3"/>
<dbReference type="FunCoup" id="A0LJK3">
    <property type="interactions" value="481"/>
</dbReference>
<dbReference type="STRING" id="335543.Sfum_1920"/>
<dbReference type="KEGG" id="sfu:Sfum_1920"/>
<dbReference type="eggNOG" id="COG0324">
    <property type="taxonomic scope" value="Bacteria"/>
</dbReference>
<dbReference type="HOGENOM" id="CLU_032616_0_1_7"/>
<dbReference type="InParanoid" id="A0LJK3"/>
<dbReference type="OrthoDB" id="9776390at2"/>
<dbReference type="Proteomes" id="UP000001784">
    <property type="component" value="Chromosome"/>
</dbReference>
<dbReference type="GO" id="GO:0005524">
    <property type="term" value="F:ATP binding"/>
    <property type="evidence" value="ECO:0007669"/>
    <property type="project" value="UniProtKB-UniRule"/>
</dbReference>
<dbReference type="GO" id="GO:0052381">
    <property type="term" value="F:tRNA dimethylallyltransferase activity"/>
    <property type="evidence" value="ECO:0007669"/>
    <property type="project" value="UniProtKB-UniRule"/>
</dbReference>
<dbReference type="GO" id="GO:0006400">
    <property type="term" value="P:tRNA modification"/>
    <property type="evidence" value="ECO:0007669"/>
    <property type="project" value="TreeGrafter"/>
</dbReference>
<dbReference type="FunFam" id="1.10.20.140:FF:000001">
    <property type="entry name" value="tRNA dimethylallyltransferase"/>
    <property type="match status" value="1"/>
</dbReference>
<dbReference type="Gene3D" id="1.10.20.140">
    <property type="match status" value="1"/>
</dbReference>
<dbReference type="Gene3D" id="3.40.50.300">
    <property type="entry name" value="P-loop containing nucleotide triphosphate hydrolases"/>
    <property type="match status" value="1"/>
</dbReference>
<dbReference type="HAMAP" id="MF_00185">
    <property type="entry name" value="IPP_trans"/>
    <property type="match status" value="1"/>
</dbReference>
<dbReference type="InterPro" id="IPR039657">
    <property type="entry name" value="Dimethylallyltransferase"/>
</dbReference>
<dbReference type="InterPro" id="IPR018022">
    <property type="entry name" value="IPT"/>
</dbReference>
<dbReference type="InterPro" id="IPR027417">
    <property type="entry name" value="P-loop_NTPase"/>
</dbReference>
<dbReference type="NCBIfam" id="TIGR00174">
    <property type="entry name" value="miaA"/>
    <property type="match status" value="1"/>
</dbReference>
<dbReference type="PANTHER" id="PTHR11088">
    <property type="entry name" value="TRNA DIMETHYLALLYLTRANSFERASE"/>
    <property type="match status" value="1"/>
</dbReference>
<dbReference type="PANTHER" id="PTHR11088:SF60">
    <property type="entry name" value="TRNA DIMETHYLALLYLTRANSFERASE"/>
    <property type="match status" value="1"/>
</dbReference>
<dbReference type="Pfam" id="PF01715">
    <property type="entry name" value="IPPT"/>
    <property type="match status" value="1"/>
</dbReference>
<dbReference type="SUPFAM" id="SSF52540">
    <property type="entry name" value="P-loop containing nucleoside triphosphate hydrolases"/>
    <property type="match status" value="2"/>
</dbReference>
<protein>
    <recommendedName>
        <fullName evidence="1">tRNA dimethylallyltransferase</fullName>
        <ecNumber evidence="1">2.5.1.75</ecNumber>
    </recommendedName>
    <alternativeName>
        <fullName evidence="1">Dimethylallyl diphosphate:tRNA dimethylallyltransferase</fullName>
        <shortName evidence="1">DMAPP:tRNA dimethylallyltransferase</shortName>
        <shortName evidence="1">DMATase</shortName>
    </alternativeName>
    <alternativeName>
        <fullName evidence="1">Isopentenyl-diphosphate:tRNA isopentenyltransferase</fullName>
        <shortName evidence="1">IPP transferase</shortName>
        <shortName evidence="1">IPPT</shortName>
        <shortName evidence="1">IPTase</shortName>
    </alternativeName>
</protein>
<name>MIAA_SYNFM</name>
<feature type="chain" id="PRO_0000377350" description="tRNA dimethylallyltransferase">
    <location>
        <begin position="1"/>
        <end position="342"/>
    </location>
</feature>
<feature type="region of interest" description="Disordered" evidence="2">
    <location>
        <begin position="1"/>
        <end position="21"/>
    </location>
</feature>
<feature type="region of interest" description="Interaction with substrate tRNA" evidence="1">
    <location>
        <begin position="65"/>
        <end position="68"/>
    </location>
</feature>
<feature type="region of interest" description="Interaction with substrate tRNA" evidence="1">
    <location>
        <begin position="189"/>
        <end position="193"/>
    </location>
</feature>
<feature type="compositionally biased region" description="Polar residues" evidence="2">
    <location>
        <begin position="1"/>
        <end position="13"/>
    </location>
</feature>
<feature type="binding site" evidence="1">
    <location>
        <begin position="40"/>
        <end position="47"/>
    </location>
    <ligand>
        <name>ATP</name>
        <dbReference type="ChEBI" id="CHEBI:30616"/>
    </ligand>
</feature>
<feature type="binding site" evidence="1">
    <location>
        <begin position="42"/>
        <end position="47"/>
    </location>
    <ligand>
        <name>substrate</name>
    </ligand>
</feature>
<feature type="site" description="Interaction with substrate tRNA" evidence="1">
    <location>
        <position position="131"/>
    </location>
</feature>
<feature type="site" description="Interaction with substrate tRNA" evidence="1">
    <location>
        <position position="154"/>
    </location>
</feature>
<proteinExistence type="inferred from homology"/>